<comment type="function">
    <text evidence="2">Component of the ubiquinol-cytochrome c reductase complex (complex III or cytochrome b-c1 complex) that is part of the mitochondrial respiratory chain. The b-c1 complex mediates electron transfer from ubiquinol to cytochrome c. Contributes to the generation of a proton gradient across the mitochondrial membrane that is then used for ATP synthesis.</text>
</comment>
<comment type="cofactor">
    <cofactor evidence="2">
        <name>heme b</name>
        <dbReference type="ChEBI" id="CHEBI:60344"/>
    </cofactor>
    <text evidence="2">Binds 2 heme b groups non-covalently.</text>
</comment>
<comment type="subunit">
    <text evidence="2">The cytochrome bc1 complex contains 11 subunits: 3 respiratory subunits (MT-CYB, CYC1 and UQCRFS1), 2 core proteins (UQCRC1 and UQCRC2) and 6 low-molecular weight proteins (UQCRH/QCR6, UQCRB/QCR7, UQCRQ/QCR8, UQCR10/QCR9, UQCR11/QCR10 and a cleavage product of UQCRFS1). This cytochrome bc1 complex then forms a dimer.</text>
</comment>
<comment type="subcellular location">
    <subcellularLocation>
        <location evidence="2">Mitochondrion inner membrane</location>
        <topology evidence="2">Multi-pass membrane protein</topology>
    </subcellularLocation>
</comment>
<comment type="miscellaneous">
    <text evidence="1">Heme 1 (or BL or b562) is low-potential and absorbs at about 562 nm, and heme 2 (or BH or b566) is high-potential and absorbs at about 566 nm.</text>
</comment>
<comment type="similarity">
    <text evidence="3 4">Belongs to the cytochrome b family.</text>
</comment>
<comment type="caution">
    <text evidence="2">The full-length protein contains only eight transmembrane helices, not nine as predicted by bioinformatics tools.</text>
</comment>
<accession>P21720</accession>
<geneLocation type="mitochondrion"/>
<sequence>MKILRKNHPLLKIINHSFIDLPTPSNISSWWNFGSLLGMCLVIQILTGLFLAMHYTSDTTTAFSSVAHICRDVNYGWLIRYLHANGASMFFICLFIHVGRGIYYGSYVLSETWNIGIILFLTTMATAFVGYVLPWGQMSFWGATVITNLLSAIPYIGTTLVEWIWGGFSVDKATLTRFFAFHFILPFIIAAFALVHLLFLHETGSNNPSGLNSDSDKIPFHPYYTIKDLLGIFLLLLVLMILTLFFPDILGDPDNFTPANPLNTPAHIKPEWYFLFAYAILRSIPNKLGGVLALILSILILAAFPLLNTSKQYGLIFRPVTQVIYWIFIANLLVLTWIGGQPVEYPFTMIGQIASITYFAIIIILIPVSNTIENNIIKL</sequence>
<evidence type="ECO:0000250" key="1"/>
<evidence type="ECO:0000250" key="2">
    <source>
        <dbReference type="UniProtKB" id="P00157"/>
    </source>
</evidence>
<evidence type="ECO:0000255" key="3">
    <source>
        <dbReference type="PROSITE-ProRule" id="PRU00967"/>
    </source>
</evidence>
<evidence type="ECO:0000255" key="4">
    <source>
        <dbReference type="PROSITE-ProRule" id="PRU00968"/>
    </source>
</evidence>
<reference key="1">
    <citation type="submission" date="2003-12" db="EMBL/GenBank/DDBJ databases">
        <title>Molecular phylogenetics and diversification of South American grass mice, genus Akodon.</title>
        <authorList>
            <person name="Smith M.F."/>
            <person name="Patton J.L."/>
        </authorList>
    </citation>
    <scope>NUCLEOTIDE SEQUENCE [GENOMIC DNA]</scope>
    <source>
        <strain>Isolate MVZ 174109</strain>
        <tissue>Liver</tissue>
    </source>
</reference>
<reference key="2">
    <citation type="journal article" date="1993" name="Biol. J. Linn. Soc. Lond.">
        <title>The diversification of South American murid rodents: evidence from mitochondrial DNA sequence data for the akodontine tribe.</title>
        <authorList>
            <person name="Smith M.F."/>
            <person name="Patton J.L."/>
        </authorList>
    </citation>
    <scope>NUCLEOTIDE SEQUENCE [GENOMIC DNA] OF 1-267</scope>
    <source>
        <strain>Isolate MVZ 174109</strain>
        <strain>Isolate MVZ 174110</strain>
        <tissue>Liver</tissue>
    </source>
</reference>
<reference key="3">
    <citation type="journal article" date="1991" name="Mol. Biol. Evol.">
        <title>Variation in mitochondrial cytochrome b sequence in natural populations of South American akodontine rodents (Muridae: Sigmodontinae).</title>
        <authorList>
            <person name="Smith M.F."/>
            <person name="Patton J.L."/>
        </authorList>
    </citation>
    <scope>NUCLEOTIDE SEQUENCE [GENOMIC DNA] OF 1-134</scope>
    <source>
        <strain>Isolate MVZ 172969</strain>
        <strain>Isolate MVZ 172970</strain>
        <strain>Isolate MVZ 174109</strain>
        <strain>Isolate MVZ 174110</strain>
        <strain>Isolate MVZ 174229</strain>
        <strain>Isolate MVZ 174230</strain>
        <tissue>Liver</tissue>
    </source>
</reference>
<organism>
    <name type="scientific">Akodon subfuscus</name>
    <name type="common">Puno grass mouse</name>
    <dbReference type="NCBI Taxonomy" id="10077"/>
    <lineage>
        <taxon>Eukaryota</taxon>
        <taxon>Metazoa</taxon>
        <taxon>Chordata</taxon>
        <taxon>Craniata</taxon>
        <taxon>Vertebrata</taxon>
        <taxon>Euteleostomi</taxon>
        <taxon>Mammalia</taxon>
        <taxon>Eutheria</taxon>
        <taxon>Euarchontoglires</taxon>
        <taxon>Glires</taxon>
        <taxon>Rodentia</taxon>
        <taxon>Myomorpha</taxon>
        <taxon>Muroidea</taxon>
        <taxon>Cricetidae</taxon>
        <taxon>Sigmodontinae</taxon>
        <taxon>Akodon</taxon>
    </lineage>
</organism>
<feature type="chain" id="PRO_0000060555" description="Cytochrome b">
    <location>
        <begin position="1"/>
        <end position="379"/>
    </location>
</feature>
<feature type="transmembrane region" description="Helical" evidence="2">
    <location>
        <begin position="33"/>
        <end position="53"/>
    </location>
</feature>
<feature type="transmembrane region" description="Helical" evidence="2">
    <location>
        <begin position="77"/>
        <end position="98"/>
    </location>
</feature>
<feature type="transmembrane region" description="Helical" evidence="2">
    <location>
        <begin position="113"/>
        <end position="133"/>
    </location>
</feature>
<feature type="transmembrane region" description="Helical" evidence="2">
    <location>
        <begin position="178"/>
        <end position="198"/>
    </location>
</feature>
<feature type="transmembrane region" description="Helical" evidence="2">
    <location>
        <begin position="226"/>
        <end position="246"/>
    </location>
</feature>
<feature type="transmembrane region" description="Helical" evidence="2">
    <location>
        <begin position="288"/>
        <end position="308"/>
    </location>
</feature>
<feature type="transmembrane region" description="Helical" evidence="2">
    <location>
        <begin position="320"/>
        <end position="340"/>
    </location>
</feature>
<feature type="transmembrane region" description="Helical" evidence="2">
    <location>
        <begin position="347"/>
        <end position="367"/>
    </location>
</feature>
<feature type="binding site" description="axial binding residue" evidence="2">
    <location>
        <position position="83"/>
    </location>
    <ligand>
        <name>heme b</name>
        <dbReference type="ChEBI" id="CHEBI:60344"/>
        <label>b562</label>
    </ligand>
    <ligandPart>
        <name>Fe</name>
        <dbReference type="ChEBI" id="CHEBI:18248"/>
    </ligandPart>
</feature>
<feature type="binding site" description="axial binding residue" evidence="2">
    <location>
        <position position="97"/>
    </location>
    <ligand>
        <name>heme b</name>
        <dbReference type="ChEBI" id="CHEBI:60344"/>
        <label>b566</label>
    </ligand>
    <ligandPart>
        <name>Fe</name>
        <dbReference type="ChEBI" id="CHEBI:18248"/>
    </ligandPart>
</feature>
<feature type="binding site" description="axial binding residue" evidence="2">
    <location>
        <position position="182"/>
    </location>
    <ligand>
        <name>heme b</name>
        <dbReference type="ChEBI" id="CHEBI:60344"/>
        <label>b562</label>
    </ligand>
    <ligandPart>
        <name>Fe</name>
        <dbReference type="ChEBI" id="CHEBI:18248"/>
    </ligandPart>
</feature>
<feature type="binding site" description="axial binding residue" evidence="2">
    <location>
        <position position="196"/>
    </location>
    <ligand>
        <name>heme b</name>
        <dbReference type="ChEBI" id="CHEBI:60344"/>
        <label>b566</label>
    </ligand>
    <ligandPart>
        <name>Fe</name>
        <dbReference type="ChEBI" id="CHEBI:18248"/>
    </ligandPart>
</feature>
<feature type="binding site" evidence="2">
    <location>
        <position position="201"/>
    </location>
    <ligand>
        <name>a ubiquinone</name>
        <dbReference type="ChEBI" id="CHEBI:16389"/>
    </ligand>
</feature>
<feature type="sequence variant" description="In strain: Isolate MVZ 174229 and Isolate MVZ 174230.">
    <original>M</original>
    <variation>T</variation>
    <location>
        <position position="39"/>
    </location>
</feature>
<protein>
    <recommendedName>
        <fullName>Cytochrome b</fullName>
    </recommendedName>
    <alternativeName>
        <fullName>Complex III subunit 3</fullName>
    </alternativeName>
    <alternativeName>
        <fullName>Complex III subunit III</fullName>
    </alternativeName>
    <alternativeName>
        <fullName>Cytochrome b-c1 complex subunit 3</fullName>
    </alternativeName>
    <alternativeName>
        <fullName>Ubiquinol-cytochrome-c reductase complex cytochrome b subunit</fullName>
    </alternativeName>
</protein>
<gene>
    <name type="primary">MT-CYB</name>
    <name type="synonym">COB</name>
    <name type="synonym">CYTB</name>
    <name type="synonym">MTCYB</name>
</gene>
<name>CYB_AKOSU</name>
<keyword id="KW-0249">Electron transport</keyword>
<keyword id="KW-0349">Heme</keyword>
<keyword id="KW-0408">Iron</keyword>
<keyword id="KW-0472">Membrane</keyword>
<keyword id="KW-0479">Metal-binding</keyword>
<keyword id="KW-0496">Mitochondrion</keyword>
<keyword id="KW-0999">Mitochondrion inner membrane</keyword>
<keyword id="KW-0679">Respiratory chain</keyword>
<keyword id="KW-0812">Transmembrane</keyword>
<keyword id="KW-1133">Transmembrane helix</keyword>
<keyword id="KW-0813">Transport</keyword>
<keyword id="KW-0830">Ubiquinone</keyword>
<proteinExistence type="inferred from homology"/>
<dbReference type="EMBL" id="M35695">
    <property type="protein sequence ID" value="AAA16982.2"/>
    <property type="molecule type" value="Genomic_DNA"/>
</dbReference>
<dbReference type="EMBL" id="M35694">
    <property type="protein sequence ID" value="AAA31622.1"/>
    <property type="molecule type" value="Genomic_DNA"/>
</dbReference>
<dbReference type="EMBL" id="M35696">
    <property type="protein sequence ID" value="AAA31623.1"/>
    <property type="molecule type" value="Genomic_DNA"/>
</dbReference>
<dbReference type="PIR" id="C23725">
    <property type="entry name" value="C23725"/>
</dbReference>
<dbReference type="SMR" id="P21720"/>
<dbReference type="GO" id="GO:0005743">
    <property type="term" value="C:mitochondrial inner membrane"/>
    <property type="evidence" value="ECO:0007669"/>
    <property type="project" value="UniProtKB-SubCell"/>
</dbReference>
<dbReference type="GO" id="GO:0045275">
    <property type="term" value="C:respiratory chain complex III"/>
    <property type="evidence" value="ECO:0007669"/>
    <property type="project" value="InterPro"/>
</dbReference>
<dbReference type="GO" id="GO:0046872">
    <property type="term" value="F:metal ion binding"/>
    <property type="evidence" value="ECO:0007669"/>
    <property type="project" value="UniProtKB-KW"/>
</dbReference>
<dbReference type="GO" id="GO:0008121">
    <property type="term" value="F:ubiquinol-cytochrome-c reductase activity"/>
    <property type="evidence" value="ECO:0007669"/>
    <property type="project" value="InterPro"/>
</dbReference>
<dbReference type="GO" id="GO:0006122">
    <property type="term" value="P:mitochondrial electron transport, ubiquinol to cytochrome c"/>
    <property type="evidence" value="ECO:0007669"/>
    <property type="project" value="TreeGrafter"/>
</dbReference>
<dbReference type="CDD" id="cd00290">
    <property type="entry name" value="cytochrome_b_C"/>
    <property type="match status" value="1"/>
</dbReference>
<dbReference type="CDD" id="cd00284">
    <property type="entry name" value="Cytochrome_b_N"/>
    <property type="match status" value="1"/>
</dbReference>
<dbReference type="FunFam" id="1.20.810.10:FF:000002">
    <property type="entry name" value="Cytochrome b"/>
    <property type="match status" value="1"/>
</dbReference>
<dbReference type="Gene3D" id="1.20.810.10">
    <property type="entry name" value="Cytochrome Bc1 Complex, Chain C"/>
    <property type="match status" value="1"/>
</dbReference>
<dbReference type="InterPro" id="IPR005798">
    <property type="entry name" value="Cyt_b/b6_C"/>
</dbReference>
<dbReference type="InterPro" id="IPR036150">
    <property type="entry name" value="Cyt_b/b6_C_sf"/>
</dbReference>
<dbReference type="InterPro" id="IPR005797">
    <property type="entry name" value="Cyt_b/b6_N"/>
</dbReference>
<dbReference type="InterPro" id="IPR027387">
    <property type="entry name" value="Cytb/b6-like_sf"/>
</dbReference>
<dbReference type="InterPro" id="IPR030689">
    <property type="entry name" value="Cytochrome_b"/>
</dbReference>
<dbReference type="InterPro" id="IPR048260">
    <property type="entry name" value="Cytochrome_b_C_euk/bac"/>
</dbReference>
<dbReference type="InterPro" id="IPR048259">
    <property type="entry name" value="Cytochrome_b_N_euk/bac"/>
</dbReference>
<dbReference type="InterPro" id="IPR016174">
    <property type="entry name" value="Di-haem_cyt_TM"/>
</dbReference>
<dbReference type="PANTHER" id="PTHR19271">
    <property type="entry name" value="CYTOCHROME B"/>
    <property type="match status" value="1"/>
</dbReference>
<dbReference type="PANTHER" id="PTHR19271:SF16">
    <property type="entry name" value="CYTOCHROME B"/>
    <property type="match status" value="1"/>
</dbReference>
<dbReference type="Pfam" id="PF00032">
    <property type="entry name" value="Cytochrom_B_C"/>
    <property type="match status" value="1"/>
</dbReference>
<dbReference type="Pfam" id="PF00033">
    <property type="entry name" value="Cytochrome_B"/>
    <property type="match status" value="1"/>
</dbReference>
<dbReference type="PIRSF" id="PIRSF038885">
    <property type="entry name" value="COB"/>
    <property type="match status" value="1"/>
</dbReference>
<dbReference type="SUPFAM" id="SSF81648">
    <property type="entry name" value="a domain/subunit of cytochrome bc1 complex (Ubiquinol-cytochrome c reductase)"/>
    <property type="match status" value="1"/>
</dbReference>
<dbReference type="SUPFAM" id="SSF81342">
    <property type="entry name" value="Transmembrane di-heme cytochromes"/>
    <property type="match status" value="1"/>
</dbReference>
<dbReference type="PROSITE" id="PS51003">
    <property type="entry name" value="CYTB_CTER"/>
    <property type="match status" value="1"/>
</dbReference>
<dbReference type="PROSITE" id="PS51002">
    <property type="entry name" value="CYTB_NTER"/>
    <property type="match status" value="1"/>
</dbReference>